<name>ATPF_BACP3</name>
<comment type="function">
    <text evidence="1">F(1)F(0) ATP synthase produces ATP from ADP in the presence of a proton or sodium gradient. F-type ATPases consist of two structural domains, F(1) containing the extramembraneous catalytic core and F(0) containing the membrane proton channel, linked together by a central stalk and a peripheral stalk. During catalysis, ATP synthesis in the catalytic domain of F(1) is coupled via a rotary mechanism of the central stalk subunits to proton translocation.</text>
</comment>
<comment type="function">
    <text evidence="1">Component of the F(0) channel, it forms part of the peripheral stalk, linking F(1) to F(0).</text>
</comment>
<comment type="subunit">
    <text evidence="1">F-type ATPases have 2 components, F(1) - the catalytic core - and F(0) - the membrane proton channel. F(1) has five subunits: alpha(3), beta(3), gamma(1), delta(1), epsilon(1). F(0) has three main subunits: a(1), b(2) and c(10-14). The alpha and beta chains form an alternating ring which encloses part of the gamma chain. F(1) is attached to F(0) by a central stalk formed by the gamma and epsilon chains, while a peripheral stalk is formed by the delta and b chains.</text>
</comment>
<comment type="subcellular location">
    <subcellularLocation>
        <location evidence="1">Cell membrane</location>
        <topology evidence="1">Single-pass membrane protein</topology>
    </subcellularLocation>
</comment>
<comment type="similarity">
    <text evidence="1">Belongs to the ATPase B chain family.</text>
</comment>
<accession>P09221</accession>
<reference key="1">
    <citation type="journal article" date="1988" name="Biochim. Biophys. Acta">
        <title>Sequence and over-expression of subunits of adenosine triphosphate synthase in thermophilic bacterium PS3.</title>
        <authorList>
            <person name="Ohta S."/>
            <person name="Yohda M."/>
            <person name="Ishizuka M."/>
            <person name="Hirata H."/>
            <person name="Hamamoto T."/>
            <person name="Otawara-Hamamoto Y."/>
            <person name="Matsuda K."/>
            <person name="Kagawa Y."/>
        </authorList>
    </citation>
    <scope>NUCLEOTIDE SEQUENCE [GENOMIC DNA]</scope>
    <scope>PROTEIN SEQUENCE OF 12-50; 80-94 AND 132-147</scope>
    <scope>SUBUNIT</scope>
</reference>
<feature type="propeptide" id="PRO_0000002628" evidence="2">
    <location>
        <begin position="1"/>
        <end position="11"/>
    </location>
</feature>
<feature type="chain" id="PRO_0000002629" description="ATP synthase subunit b">
    <location>
        <begin position="12"/>
        <end position="163"/>
    </location>
</feature>
<feature type="transmembrane region" description="Helical" evidence="1">
    <location>
        <begin position="16"/>
        <end position="36"/>
    </location>
</feature>
<dbReference type="EMBL" id="X07804">
    <property type="protein sequence ID" value="CAA30650.1"/>
    <property type="molecule type" value="Genomic_DNA"/>
</dbReference>
<dbReference type="SMR" id="P09221"/>
<dbReference type="TCDB" id="3.A.2.1.14">
    <property type="family name" value="the h+- or na+-translocating f-type, v-type and a-type atpase (f-atpase) superfamily"/>
</dbReference>
<dbReference type="GO" id="GO:0005886">
    <property type="term" value="C:plasma membrane"/>
    <property type="evidence" value="ECO:0007669"/>
    <property type="project" value="UniProtKB-SubCell"/>
</dbReference>
<dbReference type="GO" id="GO:0045259">
    <property type="term" value="C:proton-transporting ATP synthase complex"/>
    <property type="evidence" value="ECO:0007669"/>
    <property type="project" value="UniProtKB-KW"/>
</dbReference>
<dbReference type="GO" id="GO:0046933">
    <property type="term" value="F:proton-transporting ATP synthase activity, rotational mechanism"/>
    <property type="evidence" value="ECO:0007669"/>
    <property type="project" value="UniProtKB-UniRule"/>
</dbReference>
<dbReference type="GO" id="GO:0046961">
    <property type="term" value="F:proton-transporting ATPase activity, rotational mechanism"/>
    <property type="evidence" value="ECO:0007669"/>
    <property type="project" value="TreeGrafter"/>
</dbReference>
<dbReference type="CDD" id="cd06503">
    <property type="entry name" value="ATP-synt_Fo_b"/>
    <property type="match status" value="1"/>
</dbReference>
<dbReference type="Gene3D" id="1.20.5.620">
    <property type="entry name" value="F1F0 ATP synthase subunit B, membrane domain"/>
    <property type="match status" value="1"/>
</dbReference>
<dbReference type="HAMAP" id="MF_01398">
    <property type="entry name" value="ATP_synth_b_bprime"/>
    <property type="match status" value="1"/>
</dbReference>
<dbReference type="InterPro" id="IPR028987">
    <property type="entry name" value="ATP_synth_B-like_membr_sf"/>
</dbReference>
<dbReference type="InterPro" id="IPR002146">
    <property type="entry name" value="ATP_synth_b/b'su_bac/chlpt"/>
</dbReference>
<dbReference type="InterPro" id="IPR005864">
    <property type="entry name" value="ATP_synth_F0_bsu_bac"/>
</dbReference>
<dbReference type="InterPro" id="IPR050059">
    <property type="entry name" value="ATP_synthase_B_chain"/>
</dbReference>
<dbReference type="NCBIfam" id="TIGR01144">
    <property type="entry name" value="ATP_synt_b"/>
    <property type="match status" value="1"/>
</dbReference>
<dbReference type="PANTHER" id="PTHR33445:SF1">
    <property type="entry name" value="ATP SYNTHASE SUBUNIT B"/>
    <property type="match status" value="1"/>
</dbReference>
<dbReference type="PANTHER" id="PTHR33445">
    <property type="entry name" value="ATP SYNTHASE SUBUNIT B', CHLOROPLASTIC"/>
    <property type="match status" value="1"/>
</dbReference>
<dbReference type="Pfam" id="PF00430">
    <property type="entry name" value="ATP-synt_B"/>
    <property type="match status" value="1"/>
</dbReference>
<dbReference type="SUPFAM" id="SSF81573">
    <property type="entry name" value="F1F0 ATP synthase subunit B, membrane domain"/>
    <property type="match status" value="1"/>
</dbReference>
<organism>
    <name type="scientific">Bacillus sp. (strain PS3)</name>
    <dbReference type="NCBI Taxonomy" id="2334"/>
    <lineage>
        <taxon>Bacteria</taxon>
        <taxon>Bacillati</taxon>
        <taxon>Bacillota</taxon>
        <taxon>Bacilli</taxon>
        <taxon>Bacillales</taxon>
        <taxon>Bacillaceae</taxon>
        <taxon>Bacillus</taxon>
    </lineage>
</organism>
<proteinExistence type="evidence at protein level"/>
<keyword id="KW-0066">ATP synthesis</keyword>
<keyword id="KW-1003">Cell membrane</keyword>
<keyword id="KW-0138">CF(0)</keyword>
<keyword id="KW-0903">Direct protein sequencing</keyword>
<keyword id="KW-0375">Hydrogen ion transport</keyword>
<keyword id="KW-0406">Ion transport</keyword>
<keyword id="KW-0472">Membrane</keyword>
<keyword id="KW-0812">Transmembrane</keyword>
<keyword id="KW-1133">Transmembrane helix</keyword>
<keyword id="KW-0813">Transport</keyword>
<protein>
    <recommendedName>
        <fullName evidence="1">ATP synthase subunit b</fullName>
    </recommendedName>
    <alternativeName>
        <fullName evidence="1">ATP synthase F(0) sector subunit b</fullName>
    </alternativeName>
    <alternativeName>
        <fullName evidence="1">ATPase subunit I</fullName>
    </alternativeName>
    <alternativeName>
        <fullName evidence="1">F-type ATPase subunit b</fullName>
        <shortName evidence="1">F-ATPase subunit b</shortName>
    </alternativeName>
</protein>
<sequence>MLWKANVWVLGEAAHGISGGTIIYQLLMFIILLALLRKFAWQPLMNIMKQREEHIATKSTRRKNDRQEAEKLLEEQRELMKQSRQEAQALIENAASLAEEQKEQIVASARAEAERVKEAAKKEIEREKEQAMAALREQVASLSVLIASKVIEKELTEQDQAAS</sequence>
<evidence type="ECO:0000255" key="1">
    <source>
        <dbReference type="HAMAP-Rule" id="MF_01398"/>
    </source>
</evidence>
<evidence type="ECO:0000269" key="2">
    <source>
    </source>
</evidence>
<gene>
    <name evidence="1" type="primary">atpF</name>
</gene>